<keyword id="KW-1185">Reference proteome</keyword>
<proteinExistence type="predicted"/>
<comment type="function">
    <text evidence="1 2">Nonribosomal peptide synthetase; part of the gene cluster that mediates the biosynthesis of acetylaranotin, a member of the epipolythiodioxopiperazine (ETP) class of toxins characterized by a disulfide-bridged cyclic dipeptide (PubMed:23586797). The first step of acetylaranotin biosynthesis is performed by the NRPS ataP which produces diketopiperazine cyclo-L-Phe-L-Phe via the condensation of 2 phenylalanines (L-Phe) (PubMed:23586797). The ataC domain of ataTC then catalyzes the formation of bishydroxylation of cyclo-L-Phe-L-Phe (PubMed:23586797). The glutathione S-transferase domain ataG in ataIMG further catalyzes the conjugation of two glutathiones to the bishydroxylated intermediate (PubMed:23586797). Next, the dipeptidase ataJ removes the Glu residues (PubMed:23586797). The following step is performed by the carbon sulfur lyase domain ataI of ataIMG which may convert the bis-cysteinyl adduct to yield an epidithiol intermediate (PubMed:23586797). The ataT domain from ataTC then catalyzes the oxidation of the free dithiols, followed by a cyclization step catalyzed by the cytochrome P450 ataF (PubMed:23586797). AtaF probably acts as an epoxidase to promote a dual epoxidation formation at C8 and C9 along with C8' and C9', followed by the spontaneous nucleophilic attack of the amide nitrogens N10 and N10' to yield an intermediate with the pyrrolidine partial structure (PubMed:23586797). The final steps of acetylaranotin biosynthesis involve the acetylation and ring rearrangement of an epitetrathiodiketopiperazine intermediate to produce acetylaranotin (PubMed:23586797). AtaH probably catalyzes the acetylation of epitetrathiodiketopiperazine to produce a diacetate and ataY is responsible for the formation of the dihydrooxepin moiety that converts the diacetate intermediate to acetylaranotin via acetylapoaranotin (PubMed:23586797). Both enzymes could function independently in the absence of the other (PubMed:23586797). The specific function of ataL within the pathway has still to be determined (PubMed:23586797). The acetylaranotin bis-thiomethyltransferase ataS located outside of acetylaranotin gene cluster is the main thiomethyltransferase responsible for converting acetylaranotin and its related intermediates to their methylated forms (PubMed:30096370).</text>
</comment>
<comment type="pathway">
    <text evidence="1">Mycotoxin biosynthesis.</text>
</comment>
<comment type="disruption phenotype">
    <text evidence="1">Impairs the production of acetylaranotin and accumulates chemically stable intermediate cyclo-L-phe-L-phe or shunt products such as 2-hydroxy-2'-ene-cyclo-L-Phe-L-Phe and 2-imino-10'-hydroxy-cyclo-L-Phe-L-Phe (PubMed:23586797).</text>
</comment>
<name>ATAL_ASPTN</name>
<organism>
    <name type="scientific">Aspergillus terreus (strain NIH 2624 / FGSC A1156)</name>
    <dbReference type="NCBI Taxonomy" id="341663"/>
    <lineage>
        <taxon>Eukaryota</taxon>
        <taxon>Fungi</taxon>
        <taxon>Dikarya</taxon>
        <taxon>Ascomycota</taxon>
        <taxon>Pezizomycotina</taxon>
        <taxon>Eurotiomycetes</taxon>
        <taxon>Eurotiomycetidae</taxon>
        <taxon>Eurotiales</taxon>
        <taxon>Aspergillaceae</taxon>
        <taxon>Aspergillus</taxon>
        <taxon>Aspergillus subgen. Circumdati</taxon>
    </lineage>
</organism>
<sequence>MSTPTSFTFNIAYSVPINKDPSQPTLTLEEFWRGLHRGSEKPQLFAEYVADTEVLPNSKSANEFQRKLIMANGAVHTAKGVELLQDVRNADGLLDDGPDALYLTAVYELHVPDVEPGSERAKEIEREYAQLALGAARTVVETIRRWKVEGGLEDA</sequence>
<dbReference type="EMBL" id="CH476597">
    <property type="protein sequence ID" value="EAU36743.1"/>
    <property type="molecule type" value="Genomic_DNA"/>
</dbReference>
<dbReference type="RefSeq" id="XP_001212647.1">
    <property type="nucleotide sequence ID" value="XM_001212647.1"/>
</dbReference>
<dbReference type="SMR" id="Q0CS65"/>
<dbReference type="STRING" id="341663.Q0CS65"/>
<dbReference type="EnsemblFungi" id="EAU36743">
    <property type="protein sequence ID" value="EAU36743"/>
    <property type="gene ID" value="ATEG_03469"/>
</dbReference>
<dbReference type="GeneID" id="4318082"/>
<dbReference type="VEuPathDB" id="FungiDB:ATEG_03469"/>
<dbReference type="HOGENOM" id="CLU_111642_1_0_1"/>
<dbReference type="OMA" id="EIMYQDV"/>
<dbReference type="OrthoDB" id="2320332at2759"/>
<dbReference type="Proteomes" id="UP000007963">
    <property type="component" value="Unassembled WGS sequence"/>
</dbReference>
<dbReference type="CDD" id="cd08863">
    <property type="entry name" value="SRPBCC_DUF1857"/>
    <property type="match status" value="1"/>
</dbReference>
<dbReference type="Gene3D" id="3.30.530.20">
    <property type="match status" value="1"/>
</dbReference>
<dbReference type="InterPro" id="IPR015075">
    <property type="entry name" value="AtaL"/>
</dbReference>
<dbReference type="InterPro" id="IPR023393">
    <property type="entry name" value="START-like_dom_sf"/>
</dbReference>
<dbReference type="Pfam" id="PF08982">
    <property type="entry name" value="AtaL"/>
    <property type="match status" value="1"/>
</dbReference>
<dbReference type="SUPFAM" id="SSF55961">
    <property type="entry name" value="Bet v1-like"/>
    <property type="match status" value="1"/>
</dbReference>
<accession>Q0CS65</accession>
<reference key="1">
    <citation type="submission" date="2005-09" db="EMBL/GenBank/DDBJ databases">
        <title>Annotation of the Aspergillus terreus NIH2624 genome.</title>
        <authorList>
            <person name="Birren B.W."/>
            <person name="Lander E.S."/>
            <person name="Galagan J.E."/>
            <person name="Nusbaum C."/>
            <person name="Devon K."/>
            <person name="Henn M."/>
            <person name="Ma L.-J."/>
            <person name="Jaffe D.B."/>
            <person name="Butler J."/>
            <person name="Alvarez P."/>
            <person name="Gnerre S."/>
            <person name="Grabherr M."/>
            <person name="Kleber M."/>
            <person name="Mauceli E.W."/>
            <person name="Brockman W."/>
            <person name="Rounsley S."/>
            <person name="Young S.K."/>
            <person name="LaButti K."/>
            <person name="Pushparaj V."/>
            <person name="DeCaprio D."/>
            <person name="Crawford M."/>
            <person name="Koehrsen M."/>
            <person name="Engels R."/>
            <person name="Montgomery P."/>
            <person name="Pearson M."/>
            <person name="Howarth C."/>
            <person name="Larson L."/>
            <person name="Luoma S."/>
            <person name="White J."/>
            <person name="Alvarado L."/>
            <person name="Kodira C.D."/>
            <person name="Zeng Q."/>
            <person name="Oleary S."/>
            <person name="Yandava C."/>
            <person name="Denning D.W."/>
            <person name="Nierman W.C."/>
            <person name="Milne T."/>
            <person name="Madden K."/>
        </authorList>
    </citation>
    <scope>NUCLEOTIDE SEQUENCE [LARGE SCALE GENOMIC DNA]</scope>
    <source>
        <strain>NIH 2624 / FGSC A1156</strain>
    </source>
</reference>
<reference key="2">
    <citation type="journal article" date="2013" name="J. Am. Chem. Soc.">
        <title>Biosynthetic pathway for the epipolythiodioxopiperazine acetylaranotin in Aspergillus terreus revealed by genome-based deletion analysis.</title>
        <authorList>
            <person name="Guo C.J."/>
            <person name="Yeh H.H."/>
            <person name="Chiang Y.M."/>
            <person name="Sanchez J.F."/>
            <person name="Chang S.L."/>
            <person name="Bruno K.S."/>
            <person name="Wang C.C."/>
        </authorList>
    </citation>
    <scope>FUNCTION</scope>
    <scope>DISRUPTION PHENOTYPE</scope>
    <scope>PATHWAY</scope>
</reference>
<reference key="3">
    <citation type="journal article" date="2018" name="Fungal Genet. Biol.">
        <title>Genome-based deletion analysis in Aspergillus terreus reveals the acetylaranotin bis-thiomethyltransferase gene.</title>
        <authorList>
            <person name="Sun W.W."/>
            <person name="Romsdahl J."/>
            <person name="Guo C.J."/>
            <person name="Wang C.C.C."/>
        </authorList>
    </citation>
    <scope>FUNCTION</scope>
</reference>
<gene>
    <name evidence="3" type="primary">ataL</name>
    <name type="ORF">ATEG_03469</name>
</gene>
<evidence type="ECO:0000269" key="1">
    <source>
    </source>
</evidence>
<evidence type="ECO:0000269" key="2">
    <source>
    </source>
</evidence>
<evidence type="ECO:0000303" key="3">
    <source>
    </source>
</evidence>
<feature type="chain" id="PRO_0000440659" description="Acetylaranotin biosynthesis cluster protein L">
    <location>
        <begin position="1"/>
        <end position="155"/>
    </location>
</feature>
<protein>
    <recommendedName>
        <fullName evidence="3">Acetylaranotin biosynthesis cluster protein L</fullName>
    </recommendedName>
</protein>